<proteinExistence type="inferred from homology"/>
<dbReference type="EC" id="6.3.5.3" evidence="1"/>
<dbReference type="EMBL" id="CP001404">
    <property type="protein sequence ID" value="ACP48424.1"/>
    <property type="molecule type" value="Genomic_DNA"/>
</dbReference>
<dbReference type="RefSeq" id="WP_012713791.1">
    <property type="nucleotide sequence ID" value="NC_012623.1"/>
</dbReference>
<dbReference type="SMR" id="C3NH14"/>
<dbReference type="GeneID" id="7810114"/>
<dbReference type="KEGG" id="sin:YN1551_1329"/>
<dbReference type="HOGENOM" id="CLU_003100_0_1_2"/>
<dbReference type="UniPathway" id="UPA00074">
    <property type="reaction ID" value="UER00128"/>
</dbReference>
<dbReference type="Proteomes" id="UP000006818">
    <property type="component" value="Chromosome"/>
</dbReference>
<dbReference type="GO" id="GO:0005737">
    <property type="term" value="C:cytoplasm"/>
    <property type="evidence" value="ECO:0007669"/>
    <property type="project" value="UniProtKB-SubCell"/>
</dbReference>
<dbReference type="GO" id="GO:0005524">
    <property type="term" value="F:ATP binding"/>
    <property type="evidence" value="ECO:0007669"/>
    <property type="project" value="UniProtKB-UniRule"/>
</dbReference>
<dbReference type="GO" id="GO:0000287">
    <property type="term" value="F:magnesium ion binding"/>
    <property type="evidence" value="ECO:0007669"/>
    <property type="project" value="UniProtKB-UniRule"/>
</dbReference>
<dbReference type="GO" id="GO:0004642">
    <property type="term" value="F:phosphoribosylformylglycinamidine synthase activity"/>
    <property type="evidence" value="ECO:0007669"/>
    <property type="project" value="UniProtKB-UniRule"/>
</dbReference>
<dbReference type="GO" id="GO:0006189">
    <property type="term" value="P:'de novo' IMP biosynthetic process"/>
    <property type="evidence" value="ECO:0007669"/>
    <property type="project" value="UniProtKB-UniRule"/>
</dbReference>
<dbReference type="CDD" id="cd02203">
    <property type="entry name" value="PurL_repeat1"/>
    <property type="match status" value="1"/>
</dbReference>
<dbReference type="CDD" id="cd02204">
    <property type="entry name" value="PurL_repeat2"/>
    <property type="match status" value="1"/>
</dbReference>
<dbReference type="Gene3D" id="3.90.650.10">
    <property type="entry name" value="PurM-like C-terminal domain"/>
    <property type="match status" value="2"/>
</dbReference>
<dbReference type="Gene3D" id="3.30.1330.10">
    <property type="entry name" value="PurM-like, N-terminal domain"/>
    <property type="match status" value="2"/>
</dbReference>
<dbReference type="HAMAP" id="MF_00420">
    <property type="entry name" value="PurL_2"/>
    <property type="match status" value="1"/>
</dbReference>
<dbReference type="InterPro" id="IPR010074">
    <property type="entry name" value="PRibForGlyAmidine_synth_PurL"/>
</dbReference>
<dbReference type="InterPro" id="IPR041609">
    <property type="entry name" value="PurL_linker"/>
</dbReference>
<dbReference type="InterPro" id="IPR010918">
    <property type="entry name" value="PurM-like_C_dom"/>
</dbReference>
<dbReference type="InterPro" id="IPR036676">
    <property type="entry name" value="PurM-like_C_sf"/>
</dbReference>
<dbReference type="InterPro" id="IPR016188">
    <property type="entry name" value="PurM-like_N"/>
</dbReference>
<dbReference type="InterPro" id="IPR036921">
    <property type="entry name" value="PurM-like_N_sf"/>
</dbReference>
<dbReference type="NCBIfam" id="TIGR01736">
    <property type="entry name" value="FGAM_synth_II"/>
    <property type="match status" value="1"/>
</dbReference>
<dbReference type="NCBIfam" id="NF002290">
    <property type="entry name" value="PRK01213.1"/>
    <property type="match status" value="1"/>
</dbReference>
<dbReference type="PANTHER" id="PTHR43555">
    <property type="entry name" value="PHOSPHORIBOSYLFORMYLGLYCINAMIDINE SYNTHASE SUBUNIT PURL"/>
    <property type="match status" value="1"/>
</dbReference>
<dbReference type="PANTHER" id="PTHR43555:SF1">
    <property type="entry name" value="PHOSPHORIBOSYLFORMYLGLYCINAMIDINE SYNTHASE SUBUNIT PURL"/>
    <property type="match status" value="1"/>
</dbReference>
<dbReference type="Pfam" id="PF00586">
    <property type="entry name" value="AIRS"/>
    <property type="match status" value="2"/>
</dbReference>
<dbReference type="Pfam" id="PF02769">
    <property type="entry name" value="AIRS_C"/>
    <property type="match status" value="2"/>
</dbReference>
<dbReference type="Pfam" id="PF18072">
    <property type="entry name" value="FGAR-AT_linker"/>
    <property type="match status" value="1"/>
</dbReference>
<dbReference type="PIRSF" id="PIRSF001587">
    <property type="entry name" value="FGAM_synthase_II"/>
    <property type="match status" value="1"/>
</dbReference>
<dbReference type="SUPFAM" id="SSF56042">
    <property type="entry name" value="PurM C-terminal domain-like"/>
    <property type="match status" value="2"/>
</dbReference>
<dbReference type="SUPFAM" id="SSF55326">
    <property type="entry name" value="PurM N-terminal domain-like"/>
    <property type="match status" value="2"/>
</dbReference>
<organism>
    <name type="scientific">Saccharolobus islandicus (strain Y.N.15.51 / Yellowstone #2)</name>
    <name type="common">Sulfolobus islandicus</name>
    <dbReference type="NCBI Taxonomy" id="419942"/>
    <lineage>
        <taxon>Archaea</taxon>
        <taxon>Thermoproteota</taxon>
        <taxon>Thermoprotei</taxon>
        <taxon>Sulfolobales</taxon>
        <taxon>Sulfolobaceae</taxon>
        <taxon>Saccharolobus</taxon>
    </lineage>
</organism>
<accession>C3NH14</accession>
<comment type="function">
    <text evidence="1">Part of the phosphoribosylformylglycinamidine synthase complex involved in the purines biosynthetic pathway. Catalyzes the ATP-dependent conversion of formylglycinamide ribonucleotide (FGAR) and glutamine to yield formylglycinamidine ribonucleotide (FGAM) and glutamate. The FGAM synthase complex is composed of three subunits. PurQ produces an ammonia molecule by converting glutamine to glutamate. PurL transfers the ammonia molecule to FGAR to form FGAM in an ATP-dependent manner. PurS interacts with PurQ and PurL and is thought to assist in the transfer of the ammonia molecule from PurQ to PurL.</text>
</comment>
<comment type="catalytic activity">
    <reaction evidence="1">
        <text>N(2)-formyl-N(1)-(5-phospho-beta-D-ribosyl)glycinamide + L-glutamine + ATP + H2O = 2-formamido-N(1)-(5-O-phospho-beta-D-ribosyl)acetamidine + L-glutamate + ADP + phosphate + H(+)</text>
        <dbReference type="Rhea" id="RHEA:17129"/>
        <dbReference type="ChEBI" id="CHEBI:15377"/>
        <dbReference type="ChEBI" id="CHEBI:15378"/>
        <dbReference type="ChEBI" id="CHEBI:29985"/>
        <dbReference type="ChEBI" id="CHEBI:30616"/>
        <dbReference type="ChEBI" id="CHEBI:43474"/>
        <dbReference type="ChEBI" id="CHEBI:58359"/>
        <dbReference type="ChEBI" id="CHEBI:147286"/>
        <dbReference type="ChEBI" id="CHEBI:147287"/>
        <dbReference type="ChEBI" id="CHEBI:456216"/>
        <dbReference type="EC" id="6.3.5.3"/>
    </reaction>
</comment>
<comment type="pathway">
    <text evidence="1">Purine metabolism; IMP biosynthesis via de novo pathway; 5-amino-1-(5-phospho-D-ribosyl)imidazole from N(2)-formyl-N(1)-(5-phospho-D-ribosyl)glycinamide: step 1/2.</text>
</comment>
<comment type="subunit">
    <text evidence="1">Monomer. Part of the FGAM synthase complex composed of 1 PurL, 1 PurQ and 2 PurS subunits.</text>
</comment>
<comment type="subcellular location">
    <subcellularLocation>
        <location evidence="1">Cytoplasm</location>
    </subcellularLocation>
</comment>
<comment type="similarity">
    <text evidence="1">Belongs to the FGAMS family.</text>
</comment>
<reference key="1">
    <citation type="journal article" date="2009" name="Proc. Natl. Acad. Sci. U.S.A.">
        <title>Biogeography of the Sulfolobus islandicus pan-genome.</title>
        <authorList>
            <person name="Reno M.L."/>
            <person name="Held N.L."/>
            <person name="Fields C.J."/>
            <person name="Burke P.V."/>
            <person name="Whitaker R.J."/>
        </authorList>
    </citation>
    <scope>NUCLEOTIDE SEQUENCE [LARGE SCALE GENOMIC DNA]</scope>
    <source>
        <strain>Y.N.15.51 / Yellowstone #2</strain>
    </source>
</reference>
<name>PURL_SACI1</name>
<feature type="chain" id="PRO_1000206048" description="Phosphoribosylformylglycinamidine synthase subunit PurL">
    <location>
        <begin position="1"/>
        <end position="709"/>
    </location>
</feature>
<feature type="active site" evidence="1">
    <location>
        <position position="36"/>
    </location>
</feature>
<feature type="active site" description="Proton acceptor" evidence="1">
    <location>
        <position position="84"/>
    </location>
</feature>
<feature type="binding site" evidence="1">
    <location>
        <position position="39"/>
    </location>
    <ligand>
        <name>ATP</name>
        <dbReference type="ChEBI" id="CHEBI:30616"/>
    </ligand>
</feature>
<feature type="binding site" evidence="1">
    <location>
        <position position="80"/>
    </location>
    <ligand>
        <name>ATP</name>
        <dbReference type="ChEBI" id="CHEBI:30616"/>
    </ligand>
</feature>
<feature type="binding site" evidence="1">
    <location>
        <position position="82"/>
    </location>
    <ligand>
        <name>Mg(2+)</name>
        <dbReference type="ChEBI" id="CHEBI:18420"/>
        <label>1</label>
    </ligand>
</feature>
<feature type="binding site" evidence="1">
    <location>
        <begin position="83"/>
        <end position="86"/>
    </location>
    <ligand>
        <name>substrate</name>
    </ligand>
</feature>
<feature type="binding site" evidence="1">
    <location>
        <position position="105"/>
    </location>
    <ligand>
        <name>substrate</name>
    </ligand>
</feature>
<feature type="binding site" evidence="1">
    <location>
        <position position="106"/>
    </location>
    <ligand>
        <name>Mg(2+)</name>
        <dbReference type="ChEBI" id="CHEBI:18420"/>
        <label>2</label>
    </ligand>
</feature>
<feature type="binding site" evidence="1">
    <location>
        <position position="226"/>
    </location>
    <ligand>
        <name>substrate</name>
    </ligand>
</feature>
<feature type="binding site" evidence="1">
    <location>
        <position position="252"/>
    </location>
    <ligand>
        <name>Mg(2+)</name>
        <dbReference type="ChEBI" id="CHEBI:18420"/>
        <label>2</label>
    </ligand>
</feature>
<feature type="binding site" evidence="1">
    <location>
        <begin position="294"/>
        <end position="296"/>
    </location>
    <ligand>
        <name>substrate</name>
    </ligand>
</feature>
<feature type="binding site" evidence="1">
    <location>
        <position position="470"/>
    </location>
    <ligand>
        <name>ATP</name>
        <dbReference type="ChEBI" id="CHEBI:30616"/>
    </ligand>
</feature>
<feature type="binding site" evidence="1">
    <location>
        <position position="507"/>
    </location>
    <ligand>
        <name>ATP</name>
        <dbReference type="ChEBI" id="CHEBI:30616"/>
    </ligand>
</feature>
<feature type="binding site" evidence="1">
    <location>
        <position position="510"/>
    </location>
    <ligand>
        <name>substrate</name>
    </ligand>
</feature>
<evidence type="ECO:0000255" key="1">
    <source>
        <dbReference type="HAMAP-Rule" id="MF_00420"/>
    </source>
</evidence>
<keyword id="KW-0067">ATP-binding</keyword>
<keyword id="KW-0963">Cytoplasm</keyword>
<keyword id="KW-0436">Ligase</keyword>
<keyword id="KW-0460">Magnesium</keyword>
<keyword id="KW-0479">Metal-binding</keyword>
<keyword id="KW-0547">Nucleotide-binding</keyword>
<keyword id="KW-0658">Purine biosynthesis</keyword>
<gene>
    <name evidence="1" type="primary">purL</name>
    <name type="ordered locus">YN1551_1329</name>
</gene>
<sequence>MGLNLLPIEMDDIRKRLDREPNEIEWRVIDAVWSEHCSYKSSKIFLKSFSIDSPNVIMGIKDWQDAGAVDIGDGWAIVIKVESHNHPSAIDPFNGAATGVGGIIRDIISKGAKPIALMDMIRVGNLKIRKNVWLLKNIIAGIAAYGNSIGVPVVGGELSFDDTYNDNPLVDVAAIGIVRKDKIKPSIVDKAGLKLVLAGLTGIDGLGGASFASRKLSGEDEIGAVQIADPFAGKIILDVTLEIADKVEAIKDLGGGGLAVAVTEMANGLGAIVDIEKIPLRVKNMDPADVIISETQERMLYAVEEKNVEEVCKAFEEYEYPCSVIGEITSEPIIKFRYFGKDLVSLPTNALLEPPKFLWPIKNVRKNVEEKNVDLSLESTIYTVLSHPDLVSKEWVYSQFDYEVNTSTVVKPGDANGAVVSLPNGKLLAIKADGNPDLCSEDAYECGKGIVAEAYRNLATVGARGMVAVDHLQFGDPKKPEVYYTFVEAIRGIGEATRFFNIPIVGGKVSFYNENSQGKPIKPTPLIVMAGLVQGKLLKNRVEDSSYVVLLGYTRKELGGSLLSKIFKVPSQAPKVRLQEDLLSSEVVIDAINEEKITFAKDISRGGLAASLFNIIVHGYGVEISTKSILSDTDNVVENLFSESSGRFVILTNEPEWIVEKSRSKGIVASIIGKVNKKTSILTIDNTDYDLKTIVNNYFNFLEEVIGNG</sequence>
<protein>
    <recommendedName>
        <fullName evidence="1">Phosphoribosylformylglycinamidine synthase subunit PurL</fullName>
        <shortName evidence="1">FGAM synthase</shortName>
        <ecNumber evidence="1">6.3.5.3</ecNumber>
    </recommendedName>
    <alternativeName>
        <fullName evidence="1">Formylglycinamide ribonucleotide amidotransferase subunit II</fullName>
        <shortName evidence="1">FGAR amidotransferase II</shortName>
        <shortName evidence="1">FGAR-AT II</shortName>
    </alternativeName>
    <alternativeName>
        <fullName evidence="1">Glutamine amidotransferase PurL</fullName>
    </alternativeName>
    <alternativeName>
        <fullName evidence="1">Phosphoribosylformylglycinamidine synthase subunit II</fullName>
    </alternativeName>
</protein>